<accession>Q49KU6</accession>
<reference key="1">
    <citation type="journal article" date="2005" name="DNA Res.">
        <title>Complete nucleotide sequence of the chloroplast genome from the Tasmanian blue gum, Eucalyptus globulus (Myrtaceae).</title>
        <authorList>
            <person name="Steane D.A."/>
        </authorList>
    </citation>
    <scope>NUCLEOTIDE SEQUENCE [LARGE SCALE GENOMIC DNA]</scope>
</reference>
<organism>
    <name type="scientific">Eucalyptus globulus subsp. globulus</name>
    <name type="common">Tasmanian blue gum</name>
    <dbReference type="NCBI Taxonomy" id="71271"/>
    <lineage>
        <taxon>Eukaryota</taxon>
        <taxon>Viridiplantae</taxon>
        <taxon>Streptophyta</taxon>
        <taxon>Embryophyta</taxon>
        <taxon>Tracheophyta</taxon>
        <taxon>Spermatophyta</taxon>
        <taxon>Magnoliopsida</taxon>
        <taxon>eudicotyledons</taxon>
        <taxon>Gunneridae</taxon>
        <taxon>Pentapetalae</taxon>
        <taxon>rosids</taxon>
        <taxon>malvids</taxon>
        <taxon>Myrtales</taxon>
        <taxon>Myrtaceae</taxon>
        <taxon>Myrtoideae</taxon>
        <taxon>Eucalypteae</taxon>
        <taxon>Eucalyptus</taxon>
    </lineage>
</organism>
<keyword id="KW-0150">Chloroplast</keyword>
<keyword id="KW-0472">Membrane</keyword>
<keyword id="KW-0520">NAD</keyword>
<keyword id="KW-0521">NADP</keyword>
<keyword id="KW-0934">Plastid</keyword>
<keyword id="KW-0618">Plastoquinone</keyword>
<keyword id="KW-0874">Quinone</keyword>
<keyword id="KW-0793">Thylakoid</keyword>
<keyword id="KW-1278">Translocase</keyword>
<keyword id="KW-0812">Transmembrane</keyword>
<keyword id="KW-1133">Transmembrane helix</keyword>
<keyword id="KW-0813">Transport</keyword>
<gene>
    <name evidence="1" type="primary">ndhE</name>
</gene>
<sequence length="101" mass="11257">MILEHVLVLSAYLFSIGIYGLITSRNMVRALMCLELILNAVNINFVTFSDFFDSRQLKGDIFSIFVIAIAAAEAAIGLAIVSSIYRNRKSTRINQSNLLNK</sequence>
<proteinExistence type="inferred from homology"/>
<name>NU4LC_EUCGG</name>
<geneLocation type="chloroplast"/>
<feature type="chain" id="PRO_0000360328" description="NAD(P)H-quinone oxidoreductase subunit 4L, chloroplastic">
    <location>
        <begin position="1"/>
        <end position="101"/>
    </location>
</feature>
<feature type="transmembrane region" description="Helical" evidence="1">
    <location>
        <begin position="2"/>
        <end position="22"/>
    </location>
</feature>
<feature type="transmembrane region" description="Helical" evidence="1">
    <location>
        <begin position="32"/>
        <end position="52"/>
    </location>
</feature>
<feature type="transmembrane region" description="Helical" evidence="1">
    <location>
        <begin position="61"/>
        <end position="81"/>
    </location>
</feature>
<evidence type="ECO:0000255" key="1">
    <source>
        <dbReference type="HAMAP-Rule" id="MF_01456"/>
    </source>
</evidence>
<dbReference type="EC" id="7.1.1.-" evidence="1"/>
<dbReference type="EMBL" id="AY780259">
    <property type="protein sequence ID" value="AAX21080.1"/>
    <property type="molecule type" value="Genomic_DNA"/>
</dbReference>
<dbReference type="RefSeq" id="YP_636351.1">
    <property type="nucleotide sequence ID" value="NC_008115.1"/>
</dbReference>
<dbReference type="SMR" id="Q49KU6"/>
<dbReference type="GeneID" id="4108432"/>
<dbReference type="GO" id="GO:0009535">
    <property type="term" value="C:chloroplast thylakoid membrane"/>
    <property type="evidence" value="ECO:0007669"/>
    <property type="project" value="UniProtKB-SubCell"/>
</dbReference>
<dbReference type="GO" id="GO:0030964">
    <property type="term" value="C:NADH dehydrogenase complex"/>
    <property type="evidence" value="ECO:0007669"/>
    <property type="project" value="TreeGrafter"/>
</dbReference>
<dbReference type="GO" id="GO:0016655">
    <property type="term" value="F:oxidoreductase activity, acting on NAD(P)H, quinone or similar compound as acceptor"/>
    <property type="evidence" value="ECO:0007669"/>
    <property type="project" value="UniProtKB-UniRule"/>
</dbReference>
<dbReference type="GO" id="GO:0048038">
    <property type="term" value="F:quinone binding"/>
    <property type="evidence" value="ECO:0007669"/>
    <property type="project" value="UniProtKB-KW"/>
</dbReference>
<dbReference type="GO" id="GO:0042773">
    <property type="term" value="P:ATP synthesis coupled electron transport"/>
    <property type="evidence" value="ECO:0007669"/>
    <property type="project" value="InterPro"/>
</dbReference>
<dbReference type="GO" id="GO:0019684">
    <property type="term" value="P:photosynthesis, light reaction"/>
    <property type="evidence" value="ECO:0007669"/>
    <property type="project" value="UniProtKB-UniRule"/>
</dbReference>
<dbReference type="FunFam" id="1.10.287.3510:FF:000001">
    <property type="entry name" value="NADH-quinone oxidoreductase subunit K"/>
    <property type="match status" value="1"/>
</dbReference>
<dbReference type="Gene3D" id="1.10.287.3510">
    <property type="match status" value="1"/>
</dbReference>
<dbReference type="HAMAP" id="MF_01456">
    <property type="entry name" value="NDH1_NuoK"/>
    <property type="match status" value="1"/>
</dbReference>
<dbReference type="InterPro" id="IPR001133">
    <property type="entry name" value="NADH_UbQ_OxRdtase_chain4L/K"/>
</dbReference>
<dbReference type="InterPro" id="IPR039428">
    <property type="entry name" value="NUOK/Mnh_C1-like"/>
</dbReference>
<dbReference type="NCBIfam" id="NF004320">
    <property type="entry name" value="PRK05715.1-2"/>
    <property type="match status" value="1"/>
</dbReference>
<dbReference type="NCBIfam" id="NF004322">
    <property type="entry name" value="PRK05715.1-4"/>
    <property type="match status" value="1"/>
</dbReference>
<dbReference type="NCBIfam" id="NF004323">
    <property type="entry name" value="PRK05715.1-5"/>
    <property type="match status" value="1"/>
</dbReference>
<dbReference type="PANTHER" id="PTHR11434:SF16">
    <property type="entry name" value="NADH-UBIQUINONE OXIDOREDUCTASE CHAIN 4L"/>
    <property type="match status" value="1"/>
</dbReference>
<dbReference type="PANTHER" id="PTHR11434">
    <property type="entry name" value="NADH-UBIQUINONE OXIDOREDUCTASE SUBUNIT ND4L"/>
    <property type="match status" value="1"/>
</dbReference>
<dbReference type="Pfam" id="PF00420">
    <property type="entry name" value="Oxidored_q2"/>
    <property type="match status" value="1"/>
</dbReference>
<comment type="function">
    <text evidence="1">NDH shuttles electrons from NAD(P)H:plastoquinone, via FMN and iron-sulfur (Fe-S) centers, to quinones in the photosynthetic chain and possibly in a chloroplast respiratory chain. The immediate electron acceptor for the enzyme in this species is believed to be plastoquinone. Couples the redox reaction to proton translocation, and thus conserves the redox energy in a proton gradient.</text>
</comment>
<comment type="catalytic activity">
    <reaction evidence="1">
        <text>a plastoquinone + NADH + (n+1) H(+)(in) = a plastoquinol + NAD(+) + n H(+)(out)</text>
        <dbReference type="Rhea" id="RHEA:42608"/>
        <dbReference type="Rhea" id="RHEA-COMP:9561"/>
        <dbReference type="Rhea" id="RHEA-COMP:9562"/>
        <dbReference type="ChEBI" id="CHEBI:15378"/>
        <dbReference type="ChEBI" id="CHEBI:17757"/>
        <dbReference type="ChEBI" id="CHEBI:57540"/>
        <dbReference type="ChEBI" id="CHEBI:57945"/>
        <dbReference type="ChEBI" id="CHEBI:62192"/>
    </reaction>
</comment>
<comment type="catalytic activity">
    <reaction evidence="1">
        <text>a plastoquinone + NADPH + (n+1) H(+)(in) = a plastoquinol + NADP(+) + n H(+)(out)</text>
        <dbReference type="Rhea" id="RHEA:42612"/>
        <dbReference type="Rhea" id="RHEA-COMP:9561"/>
        <dbReference type="Rhea" id="RHEA-COMP:9562"/>
        <dbReference type="ChEBI" id="CHEBI:15378"/>
        <dbReference type="ChEBI" id="CHEBI:17757"/>
        <dbReference type="ChEBI" id="CHEBI:57783"/>
        <dbReference type="ChEBI" id="CHEBI:58349"/>
        <dbReference type="ChEBI" id="CHEBI:62192"/>
    </reaction>
</comment>
<comment type="subunit">
    <text evidence="1">NDH is composed of at least 16 different subunits, 5 of which are encoded in the nucleus.</text>
</comment>
<comment type="subcellular location">
    <subcellularLocation>
        <location evidence="1">Plastid</location>
        <location evidence="1">Chloroplast thylakoid membrane</location>
        <topology evidence="1">Multi-pass membrane protein</topology>
    </subcellularLocation>
</comment>
<comment type="similarity">
    <text evidence="1">Belongs to the complex I subunit 4L family.</text>
</comment>
<protein>
    <recommendedName>
        <fullName evidence="1">NAD(P)H-quinone oxidoreductase subunit 4L, chloroplastic</fullName>
        <ecNumber evidence="1">7.1.1.-</ecNumber>
    </recommendedName>
    <alternativeName>
        <fullName evidence="1">NAD(P)H dehydrogenase subunit 4L</fullName>
    </alternativeName>
    <alternativeName>
        <fullName evidence="1">NADH-plastoquinone oxidoreductase subunit 4L</fullName>
    </alternativeName>
</protein>